<proteinExistence type="inferred from homology"/>
<sequence>MASLLQLRDAIALNGSAEASQLSRQLAIPLPLVNAMLEKLTAMGKIERIELDHSGCLTGSCKSCPEGHQHCNTVIYQLKEPHAHQ</sequence>
<feature type="chain" id="PRO_0000313076" description="Probable [Fe-S]-dependent transcriptional repressor">
    <location>
        <begin position="1"/>
        <end position="85"/>
    </location>
</feature>
<feature type="binding site" evidence="1">
    <location>
        <position position="56"/>
    </location>
    <ligand>
        <name>iron-sulfur cluster</name>
        <dbReference type="ChEBI" id="CHEBI:30408"/>
    </ligand>
</feature>
<feature type="binding site" evidence="1">
    <location>
        <position position="61"/>
    </location>
    <ligand>
        <name>iron-sulfur cluster</name>
        <dbReference type="ChEBI" id="CHEBI:30408"/>
    </ligand>
</feature>
<feature type="binding site" evidence="1">
    <location>
        <position position="64"/>
    </location>
    <ligand>
        <name>iron-sulfur cluster</name>
        <dbReference type="ChEBI" id="CHEBI:30408"/>
    </ligand>
</feature>
<feature type="binding site" evidence="1">
    <location>
        <position position="71"/>
    </location>
    <ligand>
        <name>iron-sulfur cluster</name>
        <dbReference type="ChEBI" id="CHEBI:30408"/>
    </ligand>
</feature>
<reference key="1">
    <citation type="journal article" date="2006" name="J. Bacteriol.">
        <title>Complete genome sequence of Yersinia pestis strains Antiqua and Nepal516: evidence of gene reduction in an emerging pathogen.</title>
        <authorList>
            <person name="Chain P.S.G."/>
            <person name="Hu P."/>
            <person name="Malfatti S.A."/>
            <person name="Radnedge L."/>
            <person name="Larimer F."/>
            <person name="Vergez L.M."/>
            <person name="Worsham P."/>
            <person name="Chu M.C."/>
            <person name="Andersen G.L."/>
        </authorList>
    </citation>
    <scope>NUCLEOTIDE SEQUENCE [LARGE SCALE GENOMIC DNA]</scope>
    <source>
        <strain>Nepal516</strain>
    </source>
</reference>
<reference key="2">
    <citation type="submission" date="2009-04" db="EMBL/GenBank/DDBJ databases">
        <title>Yersinia pestis Nepal516A whole genome shotgun sequencing project.</title>
        <authorList>
            <person name="Plunkett G. III"/>
            <person name="Anderson B.D."/>
            <person name="Baumler D.J."/>
            <person name="Burland V."/>
            <person name="Cabot E.L."/>
            <person name="Glasner J.D."/>
            <person name="Mau B."/>
            <person name="Neeno-Eckwall E."/>
            <person name="Perna N.T."/>
            <person name="Munk A.C."/>
            <person name="Tapia R."/>
            <person name="Green L.D."/>
            <person name="Rogers Y.C."/>
            <person name="Detter J.C."/>
            <person name="Bruce D.C."/>
            <person name="Brettin T.S."/>
        </authorList>
    </citation>
    <scope>NUCLEOTIDE SEQUENCE [LARGE SCALE GENOMIC DNA]</scope>
    <source>
        <strain>Nepal516</strain>
    </source>
</reference>
<gene>
    <name evidence="1" type="primary">feoC</name>
    <name type="ordered locus">YPN_3934</name>
    <name type="ORF">YP516_4465</name>
</gene>
<protein>
    <recommendedName>
        <fullName evidence="1">Probable [Fe-S]-dependent transcriptional repressor</fullName>
    </recommendedName>
</protein>
<name>FEOC_YERPN</name>
<organism>
    <name type="scientific">Yersinia pestis bv. Antiqua (strain Nepal516)</name>
    <dbReference type="NCBI Taxonomy" id="377628"/>
    <lineage>
        <taxon>Bacteria</taxon>
        <taxon>Pseudomonadati</taxon>
        <taxon>Pseudomonadota</taxon>
        <taxon>Gammaproteobacteria</taxon>
        <taxon>Enterobacterales</taxon>
        <taxon>Yersiniaceae</taxon>
        <taxon>Yersinia</taxon>
    </lineage>
</organism>
<dbReference type="EMBL" id="CP000305">
    <property type="protein sequence ID" value="ABG20261.1"/>
    <property type="molecule type" value="Genomic_DNA"/>
</dbReference>
<dbReference type="EMBL" id="ACNQ01000019">
    <property type="protein sequence ID" value="EEO74855.1"/>
    <property type="molecule type" value="Genomic_DNA"/>
</dbReference>
<dbReference type="RefSeq" id="WP_002208920.1">
    <property type="nucleotide sequence ID" value="NZ_ACNQ01000019.1"/>
</dbReference>
<dbReference type="SMR" id="Q1CCL9"/>
<dbReference type="KEGG" id="ypn:YPN_3934"/>
<dbReference type="HOGENOM" id="CLU_189182_0_0_6"/>
<dbReference type="Proteomes" id="UP000008936">
    <property type="component" value="Chromosome"/>
</dbReference>
<dbReference type="GO" id="GO:0003677">
    <property type="term" value="F:DNA binding"/>
    <property type="evidence" value="ECO:0007669"/>
    <property type="project" value="UniProtKB-KW"/>
</dbReference>
<dbReference type="GO" id="GO:0005506">
    <property type="term" value="F:iron ion binding"/>
    <property type="evidence" value="ECO:0007669"/>
    <property type="project" value="UniProtKB-UniRule"/>
</dbReference>
<dbReference type="GO" id="GO:0051536">
    <property type="term" value="F:iron-sulfur cluster binding"/>
    <property type="evidence" value="ECO:0007669"/>
    <property type="project" value="UniProtKB-KW"/>
</dbReference>
<dbReference type="Gene3D" id="1.10.10.10">
    <property type="entry name" value="Winged helix-like DNA-binding domain superfamily/Winged helix DNA-binding domain"/>
    <property type="match status" value="1"/>
</dbReference>
<dbReference type="HAMAP" id="MF_01586">
    <property type="entry name" value="FeoC"/>
    <property type="match status" value="1"/>
</dbReference>
<dbReference type="InterPro" id="IPR023732">
    <property type="entry name" value="FeoC"/>
</dbReference>
<dbReference type="InterPro" id="IPR015102">
    <property type="entry name" value="Tscrpt_reg_HTH_FeoC"/>
</dbReference>
<dbReference type="InterPro" id="IPR036388">
    <property type="entry name" value="WH-like_DNA-bd_sf"/>
</dbReference>
<dbReference type="InterPro" id="IPR036390">
    <property type="entry name" value="WH_DNA-bd_sf"/>
</dbReference>
<dbReference type="Pfam" id="PF09012">
    <property type="entry name" value="FeoC"/>
    <property type="match status" value="1"/>
</dbReference>
<dbReference type="SUPFAM" id="SSF46785">
    <property type="entry name" value="Winged helix' DNA-binding domain"/>
    <property type="match status" value="1"/>
</dbReference>
<accession>Q1CCL9</accession>
<accession>D1Q2V2</accession>
<evidence type="ECO:0000255" key="1">
    <source>
        <dbReference type="HAMAP-Rule" id="MF_01586"/>
    </source>
</evidence>
<comment type="function">
    <text evidence="1">May function as a transcriptional regulator that controls feoABC expression.</text>
</comment>
<comment type="similarity">
    <text evidence="1">Belongs to the FeoC family.</text>
</comment>
<keyword id="KW-0238">DNA-binding</keyword>
<keyword id="KW-0408">Iron</keyword>
<keyword id="KW-0411">Iron-sulfur</keyword>
<keyword id="KW-0479">Metal-binding</keyword>
<keyword id="KW-0678">Repressor</keyword>
<keyword id="KW-0804">Transcription</keyword>
<keyword id="KW-0805">Transcription regulation</keyword>